<sequence>MSTSSSDPFFNFAKSSFRSAAAQKASASSLPPLPGPDKKVPGMDIKYDVVIVGSGPIGCTYARELVGAGYKVAMFDIGEIDSGLKIGAHKKNTVEYQKNIDKFVNVIQGQLMSVSVPVNTLVVDTLSPTSWQASTFFVRNGSNPEQDPLRNLSGQAVTRVVGGMSTHWTCATPRFDREQRPLLVKDDADADDAEWDRLYTKAESYFQTGTDQFKESIRHNLVLNKLAEEYKGQRDFQQIPLAATRRSPTFVEWSSANTVFDLQNRPNTDAPEERFNLFPAVACERVVRNALNSEIESLHIHDLISGDRFEIKADVYVLTAGAVHNTQLLVNSGFGQLGRPNPTNPPELLPSLGSYITEQSLVFCQTVMSTELIDSVKSDMTIRGTPGELTYSVTYTPGASTNKHPDWWNEKVKNHMMQHQEDPLPIPFEDPEPQVTTLFQPSHPWHTQIHRDAFSYGAVQQSIDSRLIVDWRFFGRTEPKEENKLWFSDKITDAYNMPQPTFDFRFPAGRTSKEAEDMMTDMCVMSAKIGGFLPGSLPQFMEPGLVLHLGGTHRMGFDEKEDNCCVNTDSRVFGFKNLFLGGCGNIPTAYGANPTLTAMSLAIKSCEYIKQNFTPSPFTSEAQ</sequence>
<accession>Q8J136</accession>
<name>P2OX_PENSG</name>
<organism>
    <name type="scientific">Peniophora sp. (strain SG)</name>
    <name type="common">White-rot fungus</name>
    <dbReference type="NCBI Taxonomy" id="204723"/>
    <lineage>
        <taxon>Eukaryota</taxon>
        <taxon>Fungi</taxon>
        <taxon>Dikarya</taxon>
        <taxon>Basidiomycota</taxon>
        <taxon>Agaricomycotina</taxon>
        <taxon>Agaricomycetes</taxon>
        <taxon>Russulales</taxon>
        <taxon>Peniophoraceae</taxon>
        <taxon>Peniophora</taxon>
    </lineage>
</organism>
<reference key="1">
    <citation type="submission" date="2002-08" db="EMBL/GenBank/DDBJ databases">
        <title>Pyranose oxidase of the white-rot fungus Peniophora sp. strain SG: Cloning and characterization of the gene, heterologous expression in Escherichia coli, and properties of the recombinant enzyme.</title>
        <authorList>
            <person name="Heckmann-Pohl D.M."/>
            <person name="Bastian S."/>
            <person name="Rekowski M.J."/>
            <person name="Giffhorn F."/>
        </authorList>
    </citation>
    <scope>NUCLEOTIDE SEQUENCE [MRNA]</scope>
</reference>
<reference key="2">
    <citation type="journal article" date="2004" name="Biochemistry">
        <title>Crystal structure of pyranose 2-oxidase from the white-rot fungus Peniophora sp.</title>
        <authorList>
            <person name="Bannwarth M."/>
            <person name="Bastian S."/>
            <person name="Heckmann-Pohl D.M."/>
            <person name="Giffhorn F."/>
            <person name="Schulz G.E."/>
        </authorList>
    </citation>
    <scope>X-RAY CRYSTALLOGRAPHY (2.35 ANGSTROMS)</scope>
    <scope>TETRAMERIZATION</scope>
    <scope>COFACTOR</scope>
    <scope>FAD-BINDING SITE</scope>
</reference>
<keyword id="KW-0002">3D-structure</keyword>
<keyword id="KW-0274">FAD</keyword>
<keyword id="KW-0285">Flavoprotein</keyword>
<keyword id="KW-0560">Oxidoreductase</keyword>
<keyword id="KW-0574">Periplasm</keyword>
<keyword id="KW-0732">Signal</keyword>
<dbReference type="EC" id="1.1.3.10"/>
<dbReference type="EMBL" id="AF535193">
    <property type="protein sequence ID" value="AAO13382.1"/>
    <property type="molecule type" value="mRNA"/>
</dbReference>
<dbReference type="PDB" id="1TZL">
    <property type="method" value="X-ray"/>
    <property type="resolution" value="2.35 A"/>
    <property type="chains" value="A/B/C/D/E/F/G/H=2-623"/>
</dbReference>
<dbReference type="PDB" id="2F5V">
    <property type="method" value="X-ray"/>
    <property type="resolution" value="1.41 A"/>
    <property type="chains" value="A=29-623"/>
</dbReference>
<dbReference type="PDB" id="2F6C">
    <property type="method" value="X-ray"/>
    <property type="resolution" value="1.84 A"/>
    <property type="chains" value="A=29-623"/>
</dbReference>
<dbReference type="PDBsum" id="1TZL"/>
<dbReference type="PDBsum" id="2F5V"/>
<dbReference type="PDBsum" id="2F6C"/>
<dbReference type="SMR" id="Q8J136"/>
<dbReference type="CAZy" id="AA3">
    <property type="family name" value="Auxiliary Activities 3"/>
</dbReference>
<dbReference type="BRENDA" id="1.1.3.10">
    <property type="organism ID" value="7263"/>
</dbReference>
<dbReference type="EvolutionaryTrace" id="Q8J136"/>
<dbReference type="GO" id="GO:0042597">
    <property type="term" value="C:periplasmic space"/>
    <property type="evidence" value="ECO:0007669"/>
    <property type="project" value="UniProtKB-SubCell"/>
</dbReference>
<dbReference type="GO" id="GO:0050660">
    <property type="term" value="F:flavin adenine dinucleotide binding"/>
    <property type="evidence" value="ECO:0007669"/>
    <property type="project" value="InterPro"/>
</dbReference>
<dbReference type="GO" id="GO:0050233">
    <property type="term" value="F:pyranose oxidase activity"/>
    <property type="evidence" value="ECO:0007669"/>
    <property type="project" value="UniProtKB-EC"/>
</dbReference>
<dbReference type="Gene3D" id="3.30.1920.50">
    <property type="match status" value="1"/>
</dbReference>
<dbReference type="Gene3D" id="3.50.50.60">
    <property type="entry name" value="FAD/NAD(P)-binding domain"/>
    <property type="match status" value="2"/>
</dbReference>
<dbReference type="InterPro" id="IPR036188">
    <property type="entry name" value="FAD/NAD-bd_sf"/>
</dbReference>
<dbReference type="InterPro" id="IPR007867">
    <property type="entry name" value="GMC_OxRtase_C"/>
</dbReference>
<dbReference type="InterPro" id="IPR012814">
    <property type="entry name" value="P2OX"/>
</dbReference>
<dbReference type="InterPro" id="IPR051473">
    <property type="entry name" value="P2Ox-like"/>
</dbReference>
<dbReference type="NCBIfam" id="TIGR02462">
    <property type="entry name" value="pyranose_ox"/>
    <property type="match status" value="1"/>
</dbReference>
<dbReference type="PANTHER" id="PTHR42784">
    <property type="entry name" value="PYRANOSE 2-OXIDASE"/>
    <property type="match status" value="1"/>
</dbReference>
<dbReference type="PANTHER" id="PTHR42784:SF1">
    <property type="entry name" value="PYRANOSE 2-OXIDASE"/>
    <property type="match status" value="1"/>
</dbReference>
<dbReference type="Pfam" id="PF05199">
    <property type="entry name" value="GMC_oxred_C"/>
    <property type="match status" value="1"/>
</dbReference>
<dbReference type="SUPFAM" id="SSF54373">
    <property type="entry name" value="FAD-linked reductases, C-terminal domain"/>
    <property type="match status" value="1"/>
</dbReference>
<dbReference type="SUPFAM" id="SSF51905">
    <property type="entry name" value="FAD/NAD(P)-binding domain"/>
    <property type="match status" value="1"/>
</dbReference>
<feature type="signal peptide" evidence="3">
    <location>
        <begin position="1"/>
        <end position="28"/>
    </location>
</feature>
<feature type="propeptide" id="PRO_0000012346" evidence="1">
    <location>
        <begin position="29"/>
        <end position="38"/>
    </location>
</feature>
<feature type="chain" id="PRO_0000012347" description="Pyranose 2-oxidase">
    <location>
        <begin position="39"/>
        <end position="623"/>
    </location>
</feature>
<feature type="active site" description="Proton acceptor" evidence="2">
    <location>
        <position position="548"/>
    </location>
</feature>
<feature type="active site">
    <location>
        <position position="593"/>
    </location>
</feature>
<feature type="binding site">
    <location>
        <position position="448"/>
    </location>
    <ligand>
        <name>substrate</name>
    </ligand>
</feature>
<feature type="binding site">
    <location>
        <position position="450"/>
    </location>
    <ligand>
        <name>substrate</name>
    </ligand>
</feature>
<feature type="modified residue" description="Tele-8alpha-FAD histidine">
    <location>
        <position position="167"/>
    </location>
</feature>
<feature type="strand" evidence="7">
    <location>
        <begin position="45"/>
        <end position="52"/>
    </location>
</feature>
<feature type="helix" evidence="7">
    <location>
        <begin position="56"/>
        <end position="67"/>
    </location>
</feature>
<feature type="strand" evidence="7">
    <location>
        <begin position="71"/>
        <end position="75"/>
    </location>
</feature>
<feature type="strand" evidence="8">
    <location>
        <begin position="77"/>
        <end position="79"/>
    </location>
</feature>
<feature type="strand" evidence="7">
    <location>
        <begin position="82"/>
        <end position="85"/>
    </location>
</feature>
<feature type="helix" evidence="7">
    <location>
        <begin position="94"/>
        <end position="98"/>
    </location>
</feature>
<feature type="helix" evidence="7">
    <location>
        <begin position="100"/>
        <end position="102"/>
    </location>
</feature>
<feature type="helix" evidence="7">
    <location>
        <begin position="103"/>
        <end position="109"/>
    </location>
</feature>
<feature type="strand" evidence="7">
    <location>
        <begin position="112"/>
        <end position="114"/>
    </location>
</feature>
<feature type="helix" evidence="6">
    <location>
        <begin position="148"/>
        <end position="150"/>
    </location>
</feature>
<feature type="helix" evidence="7">
    <location>
        <begin position="163"/>
        <end position="166"/>
    </location>
</feature>
<feature type="helix" evidence="7">
    <location>
        <begin position="177"/>
        <end position="179"/>
    </location>
</feature>
<feature type="strand" evidence="7">
    <location>
        <begin position="183"/>
        <end position="186"/>
    </location>
</feature>
<feature type="helix" evidence="7">
    <location>
        <begin position="188"/>
        <end position="206"/>
    </location>
</feature>
<feature type="strand" evidence="7">
    <location>
        <begin position="208"/>
        <end position="210"/>
    </location>
</feature>
<feature type="turn" evidence="7">
    <location>
        <begin position="212"/>
        <end position="215"/>
    </location>
</feature>
<feature type="helix" evidence="7">
    <location>
        <begin position="217"/>
        <end position="229"/>
    </location>
</feature>
<feature type="turn" evidence="7">
    <location>
        <begin position="230"/>
        <end position="232"/>
    </location>
</feature>
<feature type="strand" evidence="7">
    <location>
        <begin position="241"/>
        <end position="247"/>
    </location>
</feature>
<feature type="strand" evidence="7">
    <location>
        <begin position="250"/>
        <end position="253"/>
    </location>
</feature>
<feature type="helix" evidence="7">
    <location>
        <begin position="256"/>
        <end position="259"/>
    </location>
</feature>
<feature type="strand" evidence="7">
    <location>
        <begin position="265"/>
        <end position="267"/>
    </location>
</feature>
<feature type="strand" evidence="7">
    <location>
        <begin position="270"/>
        <end position="278"/>
    </location>
</feature>
<feature type="strand" evidence="7">
    <location>
        <begin position="280"/>
        <end position="288"/>
    </location>
</feature>
<feature type="strand" evidence="7">
    <location>
        <begin position="295"/>
        <end position="302"/>
    </location>
</feature>
<feature type="turn" evidence="7">
    <location>
        <begin position="303"/>
        <end position="305"/>
    </location>
</feature>
<feature type="strand" evidence="7">
    <location>
        <begin position="308"/>
        <end position="318"/>
    </location>
</feature>
<feature type="helix" evidence="7">
    <location>
        <begin position="322"/>
        <end position="331"/>
    </location>
</feature>
<feature type="strand" evidence="8">
    <location>
        <begin position="342"/>
        <end position="344"/>
    </location>
</feature>
<feature type="strand" evidence="7">
    <location>
        <begin position="347"/>
        <end position="349"/>
    </location>
</feature>
<feature type="turn" evidence="7">
    <location>
        <begin position="350"/>
        <end position="353"/>
    </location>
</feature>
<feature type="strand" evidence="7">
    <location>
        <begin position="361"/>
        <end position="368"/>
    </location>
</feature>
<feature type="helix" evidence="7">
    <location>
        <begin position="370"/>
        <end position="376"/>
    </location>
</feature>
<feature type="turn" evidence="7">
    <location>
        <begin position="377"/>
        <end position="379"/>
    </location>
</feature>
<feature type="strand" evidence="7">
    <location>
        <begin position="381"/>
        <end position="384"/>
    </location>
</feature>
<feature type="strand" evidence="7">
    <location>
        <begin position="392"/>
        <end position="394"/>
    </location>
</feature>
<feature type="helix" evidence="7">
    <location>
        <begin position="406"/>
        <end position="418"/>
    </location>
</feature>
<feature type="strand" evidence="7">
    <location>
        <begin position="434"/>
        <end position="436"/>
    </location>
</feature>
<feature type="strand" evidence="7">
    <location>
        <begin position="445"/>
        <end position="450"/>
    </location>
</feature>
<feature type="strand" evidence="8">
    <location>
        <begin position="453"/>
        <end position="455"/>
    </location>
</feature>
<feature type="strand" evidence="6">
    <location>
        <begin position="458"/>
        <end position="460"/>
    </location>
</feature>
<feature type="helix" evidence="7">
    <location>
        <begin position="465"/>
        <end position="467"/>
    </location>
</feature>
<feature type="strand" evidence="7">
    <location>
        <begin position="468"/>
        <end position="475"/>
    </location>
</feature>
<feature type="strand" evidence="7">
    <location>
        <begin position="484"/>
        <end position="492"/>
    </location>
</feature>
<feature type="strand" evidence="7">
    <location>
        <begin position="496"/>
        <end position="503"/>
    </location>
</feature>
<feature type="helix" evidence="7">
    <location>
        <begin position="510"/>
        <end position="526"/>
    </location>
</feature>
<feature type="turn" evidence="7">
    <location>
        <begin position="527"/>
        <end position="529"/>
    </location>
</feature>
<feature type="strand" evidence="7">
    <location>
        <begin position="530"/>
        <end position="532"/>
    </location>
</feature>
<feature type="strand" evidence="7">
    <location>
        <begin position="538"/>
        <end position="540"/>
    </location>
</feature>
<feature type="turn" evidence="7">
    <location>
        <begin position="543"/>
        <end position="546"/>
    </location>
</feature>
<feature type="turn" evidence="7">
    <location>
        <begin position="559"/>
        <end position="563"/>
    </location>
</feature>
<feature type="strand" evidence="7">
    <location>
        <begin position="576"/>
        <end position="580"/>
    </location>
</feature>
<feature type="helix" evidence="7">
    <location>
        <begin position="583"/>
        <end position="585"/>
    </location>
</feature>
<feature type="helix" evidence="7">
    <location>
        <begin position="595"/>
        <end position="612"/>
    </location>
</feature>
<comment type="function">
    <text evidence="1">Catalyzes the oxidation of various aldopyranoses and disaccharides on carbon-2 to the corresponding 2-keto sugars concomitant with the reduction of O(2) to H(2)O(2). Plays an important role in lignin degradation of wood rot fungi by supplying the essential cosubstrate H(2)O(2) for the ligninolytic peroxidases, lignin peroxidase and manganese-dependent peroxidase (By similarity).</text>
</comment>
<comment type="catalytic activity">
    <reaction>
        <text>D-glucose + O2 = 2-dehydro-D-glucose + H2O2</text>
        <dbReference type="Rhea" id="RHEA:10552"/>
        <dbReference type="ChEBI" id="CHEBI:4167"/>
        <dbReference type="ChEBI" id="CHEBI:15379"/>
        <dbReference type="ChEBI" id="CHEBI:16240"/>
        <dbReference type="ChEBI" id="CHEBI:16609"/>
        <dbReference type="EC" id="1.1.3.10"/>
    </reaction>
</comment>
<comment type="cofactor">
    <cofactor evidence="4">
        <name>FAD</name>
        <dbReference type="ChEBI" id="CHEBI:57692"/>
    </cofactor>
    <text evidence="4">Binds 1 FAD covalently per subunit.</text>
</comment>
<comment type="subunit">
    <text>Homotetramer.</text>
</comment>
<comment type="subcellular location">
    <subcellularLocation>
        <location evidence="1">Periplasm</location>
    </subcellularLocation>
    <text evidence="1">Hyphal periplasmic space.</text>
</comment>
<comment type="similarity">
    <text evidence="5">Belongs to the GMC oxidoreductase family.</text>
</comment>
<evidence type="ECO:0000250" key="1"/>
<evidence type="ECO:0000250" key="2">
    <source>
        <dbReference type="UniProtKB" id="E4QP00"/>
    </source>
</evidence>
<evidence type="ECO:0000255" key="3"/>
<evidence type="ECO:0000269" key="4">
    <source>
    </source>
</evidence>
<evidence type="ECO:0000305" key="5"/>
<evidence type="ECO:0007829" key="6">
    <source>
        <dbReference type="PDB" id="1TZL"/>
    </source>
</evidence>
<evidence type="ECO:0007829" key="7">
    <source>
        <dbReference type="PDB" id="2F5V"/>
    </source>
</evidence>
<evidence type="ECO:0007829" key="8">
    <source>
        <dbReference type="PDB" id="2F6C"/>
    </source>
</evidence>
<proteinExistence type="evidence at protein level"/>
<protein>
    <recommendedName>
        <fullName>Pyranose 2-oxidase</fullName>
        <shortName>P2Ox</shortName>
        <shortName>POD</shortName>
        <shortName>POx</shortName>
        <shortName>PROD</shortName>
        <shortName>Pyranose oxidase</shortName>
        <ecNumber>1.1.3.10</ecNumber>
    </recommendedName>
    <alternativeName>
        <fullName>FAD-oxidoreductase</fullName>
    </alternativeName>
    <alternativeName>
        <fullName>Glucose 2-oxidase</fullName>
    </alternativeName>
    <alternativeName>
        <fullName>Pyranose:oxygen 2-oxidoreductase</fullName>
    </alternativeName>
</protein>
<gene>
    <name type="primary">p2ox</name>
    <name type="synonym">poxSG</name>
</gene>